<organism>
    <name type="scientific">Prochlorococcus marinus (strain MIT 9301)</name>
    <dbReference type="NCBI Taxonomy" id="167546"/>
    <lineage>
        <taxon>Bacteria</taxon>
        <taxon>Bacillati</taxon>
        <taxon>Cyanobacteriota</taxon>
        <taxon>Cyanophyceae</taxon>
        <taxon>Synechococcales</taxon>
        <taxon>Prochlorococcaceae</taxon>
        <taxon>Prochlorococcus</taxon>
    </lineage>
</organism>
<gene>
    <name evidence="1" type="primary">hisA</name>
    <name type="ordered locus">P9301_08571</name>
</gene>
<dbReference type="EC" id="5.3.1.16" evidence="1"/>
<dbReference type="EMBL" id="CP000576">
    <property type="protein sequence ID" value="ABO17480.1"/>
    <property type="molecule type" value="Genomic_DNA"/>
</dbReference>
<dbReference type="RefSeq" id="WP_011862830.1">
    <property type="nucleotide sequence ID" value="NC_009091.1"/>
</dbReference>
<dbReference type="SMR" id="A3PCK5"/>
<dbReference type="STRING" id="167546.P9301_08571"/>
<dbReference type="KEGG" id="pmg:P9301_08571"/>
<dbReference type="eggNOG" id="COG0106">
    <property type="taxonomic scope" value="Bacteria"/>
</dbReference>
<dbReference type="HOGENOM" id="CLU_048577_1_1_3"/>
<dbReference type="OrthoDB" id="9807749at2"/>
<dbReference type="UniPathway" id="UPA00031">
    <property type="reaction ID" value="UER00009"/>
</dbReference>
<dbReference type="Proteomes" id="UP000001430">
    <property type="component" value="Chromosome"/>
</dbReference>
<dbReference type="GO" id="GO:0005737">
    <property type="term" value="C:cytoplasm"/>
    <property type="evidence" value="ECO:0007669"/>
    <property type="project" value="UniProtKB-SubCell"/>
</dbReference>
<dbReference type="GO" id="GO:0003949">
    <property type="term" value="F:1-(5-phosphoribosyl)-5-[(5-phosphoribosylamino)methylideneamino]imidazole-4-carboxamide isomerase activity"/>
    <property type="evidence" value="ECO:0007669"/>
    <property type="project" value="UniProtKB-UniRule"/>
</dbReference>
<dbReference type="GO" id="GO:0000105">
    <property type="term" value="P:L-histidine biosynthetic process"/>
    <property type="evidence" value="ECO:0007669"/>
    <property type="project" value="UniProtKB-UniRule"/>
</dbReference>
<dbReference type="GO" id="GO:0000162">
    <property type="term" value="P:L-tryptophan biosynthetic process"/>
    <property type="evidence" value="ECO:0007669"/>
    <property type="project" value="TreeGrafter"/>
</dbReference>
<dbReference type="CDD" id="cd04732">
    <property type="entry name" value="HisA"/>
    <property type="match status" value="1"/>
</dbReference>
<dbReference type="FunFam" id="3.20.20.70:FF:000009">
    <property type="entry name" value="1-(5-phosphoribosyl)-5-[(5-phosphoribosylamino)methylideneamino] imidazole-4-carboxamide isomerase"/>
    <property type="match status" value="1"/>
</dbReference>
<dbReference type="Gene3D" id="3.20.20.70">
    <property type="entry name" value="Aldolase class I"/>
    <property type="match status" value="1"/>
</dbReference>
<dbReference type="HAMAP" id="MF_01014">
    <property type="entry name" value="HisA"/>
    <property type="match status" value="1"/>
</dbReference>
<dbReference type="InterPro" id="IPR013785">
    <property type="entry name" value="Aldolase_TIM"/>
</dbReference>
<dbReference type="InterPro" id="IPR006062">
    <property type="entry name" value="His_biosynth"/>
</dbReference>
<dbReference type="InterPro" id="IPR006063">
    <property type="entry name" value="HisA_bact_arch"/>
</dbReference>
<dbReference type="InterPro" id="IPR044524">
    <property type="entry name" value="Isoase_HisA-like"/>
</dbReference>
<dbReference type="InterPro" id="IPR023016">
    <property type="entry name" value="Isoase_HisA-like_bact"/>
</dbReference>
<dbReference type="InterPro" id="IPR011060">
    <property type="entry name" value="RibuloseP-bd_barrel"/>
</dbReference>
<dbReference type="NCBIfam" id="TIGR00007">
    <property type="entry name" value="1-(5-phosphoribosyl)-5-[(5-phosphoribosylamino)methylideneamino]imidazole-4-carboxamide isomerase"/>
    <property type="match status" value="1"/>
</dbReference>
<dbReference type="PANTHER" id="PTHR43090">
    <property type="entry name" value="1-(5-PHOSPHORIBOSYL)-5-[(5-PHOSPHORIBOSYLAMINO)METHYLIDENEAMINO] IMIDAZOLE-4-CARBOXAMIDE ISOMERASE"/>
    <property type="match status" value="1"/>
</dbReference>
<dbReference type="PANTHER" id="PTHR43090:SF2">
    <property type="entry name" value="1-(5-PHOSPHORIBOSYL)-5-[(5-PHOSPHORIBOSYLAMINO)METHYLIDENEAMINO] IMIDAZOLE-4-CARBOXAMIDE ISOMERASE"/>
    <property type="match status" value="1"/>
</dbReference>
<dbReference type="Pfam" id="PF00977">
    <property type="entry name" value="His_biosynth"/>
    <property type="match status" value="1"/>
</dbReference>
<dbReference type="SUPFAM" id="SSF51366">
    <property type="entry name" value="Ribulose-phoshate binding barrel"/>
    <property type="match status" value="1"/>
</dbReference>
<sequence length="255" mass="28219">MNLIPAIDLMNGKCVRLFKGDFNKRKDFTKEPHEQAKFWESEGAKCIHIVDLDAAKTGSPTNDKSIKKIAKTVNIPIQIGGGIRSQERIEQLFSYGIEKVIMGTSAIENKELVKDLSNKYPGRIIVGIDAKNGKVSTRGWLEQSNIFATDLVKEFSSFKIASFIVTDINTDGTLEGTNEEFIKSILEITDIPVIASGGVGSISDLLSLVKFENSGLFGVIVGKALYENKFTIKEANNVLSSERLNDFDLNRNYYA</sequence>
<comment type="catalytic activity">
    <reaction evidence="1">
        <text>1-(5-phospho-beta-D-ribosyl)-5-[(5-phospho-beta-D-ribosylamino)methylideneamino]imidazole-4-carboxamide = 5-[(5-phospho-1-deoxy-D-ribulos-1-ylimino)methylamino]-1-(5-phospho-beta-D-ribosyl)imidazole-4-carboxamide</text>
        <dbReference type="Rhea" id="RHEA:15469"/>
        <dbReference type="ChEBI" id="CHEBI:58435"/>
        <dbReference type="ChEBI" id="CHEBI:58525"/>
        <dbReference type="EC" id="5.3.1.16"/>
    </reaction>
</comment>
<comment type="pathway">
    <text evidence="1">Amino-acid biosynthesis; L-histidine biosynthesis; L-histidine from 5-phospho-alpha-D-ribose 1-diphosphate: step 4/9.</text>
</comment>
<comment type="subcellular location">
    <subcellularLocation>
        <location evidence="1">Cytoplasm</location>
    </subcellularLocation>
</comment>
<comment type="similarity">
    <text evidence="1">Belongs to the HisA/HisF family.</text>
</comment>
<reference key="1">
    <citation type="journal article" date="2007" name="PLoS Genet.">
        <title>Patterns and implications of gene gain and loss in the evolution of Prochlorococcus.</title>
        <authorList>
            <person name="Kettler G.C."/>
            <person name="Martiny A.C."/>
            <person name="Huang K."/>
            <person name="Zucker J."/>
            <person name="Coleman M.L."/>
            <person name="Rodrigue S."/>
            <person name="Chen F."/>
            <person name="Lapidus A."/>
            <person name="Ferriera S."/>
            <person name="Johnson J."/>
            <person name="Steglich C."/>
            <person name="Church G.M."/>
            <person name="Richardson P."/>
            <person name="Chisholm S.W."/>
        </authorList>
    </citation>
    <scope>NUCLEOTIDE SEQUENCE [LARGE SCALE GENOMIC DNA]</scope>
    <source>
        <strain>MIT 9301</strain>
    </source>
</reference>
<evidence type="ECO:0000255" key="1">
    <source>
        <dbReference type="HAMAP-Rule" id="MF_01014"/>
    </source>
</evidence>
<protein>
    <recommendedName>
        <fullName evidence="1">1-(5-phosphoribosyl)-5-[(5-phosphoribosylamino)methylideneamino] imidazole-4-carboxamide isomerase</fullName>
        <ecNumber evidence="1">5.3.1.16</ecNumber>
    </recommendedName>
    <alternativeName>
        <fullName evidence="1">Phosphoribosylformimino-5-aminoimidazole carboxamide ribotide isomerase</fullName>
    </alternativeName>
</protein>
<keyword id="KW-0028">Amino-acid biosynthesis</keyword>
<keyword id="KW-0963">Cytoplasm</keyword>
<keyword id="KW-0368">Histidine biosynthesis</keyword>
<keyword id="KW-0413">Isomerase</keyword>
<keyword id="KW-1185">Reference proteome</keyword>
<feature type="chain" id="PRO_0000290508" description="1-(5-phosphoribosyl)-5-[(5-phosphoribosylamino)methylideneamino] imidazole-4-carboxamide isomerase">
    <location>
        <begin position="1"/>
        <end position="255"/>
    </location>
</feature>
<feature type="active site" description="Proton acceptor" evidence="1">
    <location>
        <position position="8"/>
    </location>
</feature>
<feature type="active site" description="Proton donor" evidence="1">
    <location>
        <position position="129"/>
    </location>
</feature>
<name>HIS4_PROM0</name>
<proteinExistence type="inferred from homology"/>
<accession>A3PCK5</accession>